<dbReference type="EMBL" id="D12517">
    <property type="protein sequence ID" value="BAA02083.2"/>
    <property type="molecule type" value="Genomic_RNA"/>
</dbReference>
<dbReference type="PIR" id="JQ1427">
    <property type="entry name" value="JQ1427"/>
</dbReference>
<dbReference type="RefSeq" id="NP_620643.1">
    <property type="nucleotide sequence ID" value="NC_003794.1"/>
</dbReference>
<dbReference type="KEGG" id="vg:944376"/>
<dbReference type="OrthoDB" id="16070at10239"/>
<dbReference type="Proteomes" id="UP000007225">
    <property type="component" value="Genome"/>
</dbReference>
<dbReference type="GO" id="GO:0030430">
    <property type="term" value="C:host cell cytoplasm"/>
    <property type="evidence" value="ECO:0007669"/>
    <property type="project" value="UniProtKB-SubCell"/>
</dbReference>
<dbReference type="GO" id="GO:0005524">
    <property type="term" value="F:ATP binding"/>
    <property type="evidence" value="ECO:0007669"/>
    <property type="project" value="InterPro"/>
</dbReference>
<dbReference type="GO" id="GO:0003723">
    <property type="term" value="F:RNA binding"/>
    <property type="evidence" value="ECO:0007669"/>
    <property type="project" value="UniProtKB-KW"/>
</dbReference>
<dbReference type="GO" id="GO:0052170">
    <property type="term" value="P:symbiont-mediated suppression of host innate immune response"/>
    <property type="evidence" value="ECO:0007669"/>
    <property type="project" value="UniProtKB-KW"/>
</dbReference>
<dbReference type="GO" id="GO:0046740">
    <property type="term" value="P:transport of virus in host, cell to cell"/>
    <property type="evidence" value="ECO:0007669"/>
    <property type="project" value="UniProtKB-KW"/>
</dbReference>
<dbReference type="InterPro" id="IPR027351">
    <property type="entry name" value="(+)RNA_virus_helicase_core_dom"/>
</dbReference>
<dbReference type="Pfam" id="PF01443">
    <property type="entry name" value="Viral_helicase1"/>
    <property type="match status" value="1"/>
</dbReference>
<dbReference type="PROSITE" id="PS51657">
    <property type="entry name" value="PSRV_HELICASE"/>
    <property type="match status" value="1"/>
</dbReference>
<sequence>MVEFTKRLLLERNFERTNRPITGPIVVHAVAGAGKSSVINTVSLTFQLICWTTLPEEKASFNCLHLRHLDGPAFPGAFVDEYQLADTDLSEAAFLFGDPLQYPGPAAQVPHFVKLFSHRCGLNSASLIRELGIAFEASKLDSVQHLDPYSSDPEGTILAFEPEVQAALASHSLDFLCLDEFRGKQWPVCTLYVSTKNLCDLDRPSVYVALTRHYERLLIMSFDAADTSA</sequence>
<proteinExistence type="inferred from homology"/>
<keyword id="KW-1035">Host cytoplasm</keyword>
<keyword id="KW-0945">Host-virus interaction</keyword>
<keyword id="KW-1090">Inhibition of host innate immune response by virus</keyword>
<keyword id="KW-1185">Reference proteome</keyword>
<keyword id="KW-0694">RNA-binding</keyword>
<keyword id="KW-0941">Suppressor of RNA silencing</keyword>
<keyword id="KW-0813">Transport</keyword>
<keyword id="KW-0899">Viral immunoevasion</keyword>
<keyword id="KW-0916">Viral movement protein</keyword>
<reference key="1">
    <citation type="journal article" date="1992" name="J. Gen. Virol.">
        <title>The nucleotide sequence and genome organization of strawberry mild yellow edge-associated potexvirus.</title>
        <authorList>
            <person name="Jelkmann W."/>
            <person name="Maiss E."/>
            <person name="Martin R.R."/>
        </authorList>
    </citation>
    <scope>NUCLEOTIDE SEQUENCE [GENOMIC RNA]</scope>
    <source>
        <strain>MY-18</strain>
    </source>
</reference>
<reference key="2">
    <citation type="journal article" date="2005" name="Mol. Plant Microbe Interact.">
        <title>A new cell-to-cell transport model for Potexviruses.</title>
        <authorList>
            <person name="Verchot-Lubicz J."/>
        </authorList>
    </citation>
    <scope>REVIEW</scope>
</reference>
<protein>
    <recommendedName>
        <fullName>Movement and silencing protein TGBp1</fullName>
    </recommendedName>
    <alternativeName>
        <fullName>25 kDa protein</fullName>
    </alternativeName>
    <alternativeName>
        <fullName>Silencing suppressor P25</fullName>
    </alternativeName>
    <alternativeName>
        <fullName>Triple gene block 1 protein</fullName>
        <shortName>TGBp1</shortName>
    </alternativeName>
</protein>
<name>TGB1_SMYEA</name>
<organism>
    <name type="scientific">Strawberry mild yellow edge-associated virus</name>
    <name type="common">SMYEaV</name>
    <dbReference type="NCBI Taxonomy" id="12187"/>
    <lineage>
        <taxon>Viruses</taxon>
        <taxon>Riboviria</taxon>
        <taxon>Orthornavirae</taxon>
        <taxon>Kitrinoviricota</taxon>
        <taxon>Alsuviricetes</taxon>
        <taxon>Tymovirales</taxon>
        <taxon>Alphaflexiviridae</taxon>
        <taxon>Potexvirus</taxon>
    </lineage>
</organism>
<gene>
    <name type="ORF">ORF2</name>
</gene>
<evidence type="ECO:0000250" key="1"/>
<evidence type="ECO:0000305" key="2"/>
<feature type="chain" id="PRO_0000222574" description="Movement and silencing protein TGBp1">
    <location>
        <begin position="1"/>
        <end position="229"/>
    </location>
</feature>
<feature type="domain" description="(+)RNA virus helicase ATP-binding">
    <location>
        <begin position="1"/>
        <end position="114"/>
    </location>
</feature>
<feature type="domain" description="(+)RNA virus helicase C-terminal">
    <location>
        <begin position="115"/>
        <end position="229"/>
    </location>
</feature>
<comment type="function">
    <text evidence="1">Transports viral genome to neighboring plant cells directly through plasmosdesmata, without any budding. The movement protein allows efficient cell to cell propagation, by bypassing the host cell wall barrier. Increases plasmodesma size exclusion limit. Acts as a suppressor of RNA-mediated gene silencing, also known as post-transcriptional gene silencing (PTGS), a mechanism of plant viral defense that limits the accumulation of viral RNAs (By similarity).</text>
</comment>
<comment type="subunit">
    <text evidence="1">Homodimer and homooligomer. Interacts with capsid protein. Interacts with host AGO1; this interaction targets the host protein for degradation, thereby suppressing the antiviral RNA silencing (By similarity).</text>
</comment>
<comment type="subcellular location">
    <subcellularLocation>
        <location evidence="1">Host cytoplasm</location>
    </subcellularLocation>
</comment>
<comment type="miscellaneous">
    <text>TGBp1, TGBp2 and TGBp3 seem to act together for cell-to-cell propagation. TGBp1 is the main movement protein that physically cross the plasmodesma with the viral genome. TGBp2 and TGBp3 would facilitate TGBp1 function.</text>
</comment>
<comment type="similarity">
    <text evidence="2">Belongs to the Tymovirales TGBp1 protein family.</text>
</comment>
<accession>Q00846</accession>
<organismHost>
    <name type="scientific">Chenopodium quinoa</name>
    <name type="common">Quinoa</name>
    <dbReference type="NCBI Taxonomy" id="63459"/>
</organismHost>
<organismHost>
    <name type="scientific">Fragaria vesca</name>
    <name type="common">Woodland strawberry</name>
    <name type="synonym">Potentilla vesca</name>
    <dbReference type="NCBI Taxonomy" id="57918"/>
</organismHost>
<organismHost>
    <name type="scientific">Rubus rosifolius</name>
    <dbReference type="NCBI Taxonomy" id="59498"/>
</organismHost>